<proteinExistence type="inferred from homology"/>
<gene>
    <name evidence="1" type="primary">argS</name>
    <name type="ordered locus">ECS88_1935</name>
</gene>
<evidence type="ECO:0000255" key="1">
    <source>
        <dbReference type="HAMAP-Rule" id="MF_00123"/>
    </source>
</evidence>
<reference key="1">
    <citation type="journal article" date="2009" name="PLoS Genet.">
        <title>Organised genome dynamics in the Escherichia coli species results in highly diverse adaptive paths.</title>
        <authorList>
            <person name="Touchon M."/>
            <person name="Hoede C."/>
            <person name="Tenaillon O."/>
            <person name="Barbe V."/>
            <person name="Baeriswyl S."/>
            <person name="Bidet P."/>
            <person name="Bingen E."/>
            <person name="Bonacorsi S."/>
            <person name="Bouchier C."/>
            <person name="Bouvet O."/>
            <person name="Calteau A."/>
            <person name="Chiapello H."/>
            <person name="Clermont O."/>
            <person name="Cruveiller S."/>
            <person name="Danchin A."/>
            <person name="Diard M."/>
            <person name="Dossat C."/>
            <person name="Karoui M.E."/>
            <person name="Frapy E."/>
            <person name="Garry L."/>
            <person name="Ghigo J.M."/>
            <person name="Gilles A.M."/>
            <person name="Johnson J."/>
            <person name="Le Bouguenec C."/>
            <person name="Lescat M."/>
            <person name="Mangenot S."/>
            <person name="Martinez-Jehanne V."/>
            <person name="Matic I."/>
            <person name="Nassif X."/>
            <person name="Oztas S."/>
            <person name="Petit M.A."/>
            <person name="Pichon C."/>
            <person name="Rouy Z."/>
            <person name="Ruf C.S."/>
            <person name="Schneider D."/>
            <person name="Tourret J."/>
            <person name="Vacherie B."/>
            <person name="Vallenet D."/>
            <person name="Medigue C."/>
            <person name="Rocha E.P.C."/>
            <person name="Denamur E."/>
        </authorList>
    </citation>
    <scope>NUCLEOTIDE SEQUENCE [LARGE SCALE GENOMIC DNA]</scope>
    <source>
        <strain>S88 / ExPEC</strain>
    </source>
</reference>
<sequence>MNIQALLSEKVRQAMIAAGAPADCEPQVRQSAKVQFGNYQANGMMAVAKKLGMAPRQLAEQVLTHLDLNGIASKVEIAGPGFINIFLDPAFLAEHVQQALASDRLGVAMPEKQTIVVDYSAPNVAKEMHVGHLRSTIIGDAAVRTLEFLGHKVIRANHVGDWGTQFGMLIAWLEKQQQENAGEMELADLEGFYRDAKKHYDEDEEFAERARNYVVKLQSGDEYFREMWRKLVDITMTQNQITYDRLNVTLTRDDVMGESLYNPMLPGIVADLKAKGLAVESEGATVVFLDEFKNKEGEPMGVIIQKKDGGYLYTTTDIACAKYRYETLHADRVLYYIDSRQHQHLMQAWAIVRKAGYVPESVPLEHHMFGMMLGKDGKPFKTRAGGTVKLADLLDEALERARRLVAEKNPDMPADELEKLANAVGIGAVKYADLSKNRTTDYIFDWDNMLAFEGNTAPYMQYAYTRVLSVFRKAEIDEEQLAAAPVIIREDREAQLAARLLQFEETLTVVAREGTPHVMCAYLYDLAGLFSGFYEHCPILSAENEEVRNSRLKLAQLTAKTLKLGLDTLGIETVERM</sequence>
<feature type="chain" id="PRO_1000198905" description="Arginine--tRNA ligase">
    <location>
        <begin position="1"/>
        <end position="577"/>
    </location>
</feature>
<feature type="short sequence motif" description="'HIGH' region">
    <location>
        <begin position="122"/>
        <end position="132"/>
    </location>
</feature>
<accession>B7MBT5</accession>
<keyword id="KW-0030">Aminoacyl-tRNA synthetase</keyword>
<keyword id="KW-0067">ATP-binding</keyword>
<keyword id="KW-0963">Cytoplasm</keyword>
<keyword id="KW-0436">Ligase</keyword>
<keyword id="KW-0547">Nucleotide-binding</keyword>
<keyword id="KW-0648">Protein biosynthesis</keyword>
<keyword id="KW-1185">Reference proteome</keyword>
<name>SYR_ECO45</name>
<organism>
    <name type="scientific">Escherichia coli O45:K1 (strain S88 / ExPEC)</name>
    <dbReference type="NCBI Taxonomy" id="585035"/>
    <lineage>
        <taxon>Bacteria</taxon>
        <taxon>Pseudomonadati</taxon>
        <taxon>Pseudomonadota</taxon>
        <taxon>Gammaproteobacteria</taxon>
        <taxon>Enterobacterales</taxon>
        <taxon>Enterobacteriaceae</taxon>
        <taxon>Escherichia</taxon>
    </lineage>
</organism>
<protein>
    <recommendedName>
        <fullName evidence="1">Arginine--tRNA ligase</fullName>
        <ecNumber evidence="1">6.1.1.19</ecNumber>
    </recommendedName>
    <alternativeName>
        <fullName evidence="1">Arginyl-tRNA synthetase</fullName>
        <shortName evidence="1">ArgRS</shortName>
    </alternativeName>
</protein>
<dbReference type="EC" id="6.1.1.19" evidence="1"/>
<dbReference type="EMBL" id="CU928161">
    <property type="protein sequence ID" value="CAR03237.1"/>
    <property type="molecule type" value="Genomic_DNA"/>
</dbReference>
<dbReference type="RefSeq" id="WP_001025351.1">
    <property type="nucleotide sequence ID" value="NC_011742.1"/>
</dbReference>
<dbReference type="SMR" id="B7MBT5"/>
<dbReference type="KEGG" id="ecz:ECS88_1935"/>
<dbReference type="HOGENOM" id="CLU_006406_5_1_6"/>
<dbReference type="Proteomes" id="UP000000747">
    <property type="component" value="Chromosome"/>
</dbReference>
<dbReference type="GO" id="GO:0005737">
    <property type="term" value="C:cytoplasm"/>
    <property type="evidence" value="ECO:0007669"/>
    <property type="project" value="UniProtKB-SubCell"/>
</dbReference>
<dbReference type="GO" id="GO:0004814">
    <property type="term" value="F:arginine-tRNA ligase activity"/>
    <property type="evidence" value="ECO:0007669"/>
    <property type="project" value="UniProtKB-UniRule"/>
</dbReference>
<dbReference type="GO" id="GO:0005524">
    <property type="term" value="F:ATP binding"/>
    <property type="evidence" value="ECO:0007669"/>
    <property type="project" value="UniProtKB-UniRule"/>
</dbReference>
<dbReference type="GO" id="GO:0006420">
    <property type="term" value="P:arginyl-tRNA aminoacylation"/>
    <property type="evidence" value="ECO:0007669"/>
    <property type="project" value="UniProtKB-UniRule"/>
</dbReference>
<dbReference type="CDD" id="cd07956">
    <property type="entry name" value="Anticodon_Ia_Arg"/>
    <property type="match status" value="1"/>
</dbReference>
<dbReference type="CDD" id="cd00671">
    <property type="entry name" value="ArgRS_core"/>
    <property type="match status" value="1"/>
</dbReference>
<dbReference type="FunFam" id="1.10.730.10:FF:000001">
    <property type="entry name" value="Arginine--tRNA ligase"/>
    <property type="match status" value="1"/>
</dbReference>
<dbReference type="FunFam" id="3.30.1360.70:FF:000001">
    <property type="entry name" value="Arginine--tRNA ligase"/>
    <property type="match status" value="1"/>
</dbReference>
<dbReference type="FunFam" id="3.40.50.620:FF:000030">
    <property type="entry name" value="Arginine--tRNA ligase"/>
    <property type="match status" value="1"/>
</dbReference>
<dbReference type="Gene3D" id="3.30.1360.70">
    <property type="entry name" value="Arginyl tRNA synthetase N-terminal domain"/>
    <property type="match status" value="1"/>
</dbReference>
<dbReference type="Gene3D" id="3.40.50.620">
    <property type="entry name" value="HUPs"/>
    <property type="match status" value="1"/>
</dbReference>
<dbReference type="Gene3D" id="1.10.730.10">
    <property type="entry name" value="Isoleucyl-tRNA Synthetase, Domain 1"/>
    <property type="match status" value="1"/>
</dbReference>
<dbReference type="HAMAP" id="MF_00123">
    <property type="entry name" value="Arg_tRNA_synth"/>
    <property type="match status" value="1"/>
</dbReference>
<dbReference type="InterPro" id="IPR001412">
    <property type="entry name" value="aa-tRNA-synth_I_CS"/>
</dbReference>
<dbReference type="InterPro" id="IPR001278">
    <property type="entry name" value="Arg-tRNA-ligase"/>
</dbReference>
<dbReference type="InterPro" id="IPR005148">
    <property type="entry name" value="Arg-tRNA-synth_N"/>
</dbReference>
<dbReference type="InterPro" id="IPR036695">
    <property type="entry name" value="Arg-tRNA-synth_N_sf"/>
</dbReference>
<dbReference type="InterPro" id="IPR035684">
    <property type="entry name" value="ArgRS_core"/>
</dbReference>
<dbReference type="InterPro" id="IPR008909">
    <property type="entry name" value="DALR_anticod-bd"/>
</dbReference>
<dbReference type="InterPro" id="IPR014729">
    <property type="entry name" value="Rossmann-like_a/b/a_fold"/>
</dbReference>
<dbReference type="InterPro" id="IPR009080">
    <property type="entry name" value="tRNAsynth_Ia_anticodon-bd"/>
</dbReference>
<dbReference type="NCBIfam" id="TIGR00456">
    <property type="entry name" value="argS"/>
    <property type="match status" value="1"/>
</dbReference>
<dbReference type="PANTHER" id="PTHR11956:SF5">
    <property type="entry name" value="ARGININE--TRNA LIGASE, CYTOPLASMIC"/>
    <property type="match status" value="1"/>
</dbReference>
<dbReference type="PANTHER" id="PTHR11956">
    <property type="entry name" value="ARGINYL-TRNA SYNTHETASE"/>
    <property type="match status" value="1"/>
</dbReference>
<dbReference type="Pfam" id="PF03485">
    <property type="entry name" value="Arg_tRNA_synt_N"/>
    <property type="match status" value="1"/>
</dbReference>
<dbReference type="Pfam" id="PF05746">
    <property type="entry name" value="DALR_1"/>
    <property type="match status" value="1"/>
</dbReference>
<dbReference type="Pfam" id="PF00750">
    <property type="entry name" value="tRNA-synt_1d"/>
    <property type="match status" value="1"/>
</dbReference>
<dbReference type="PRINTS" id="PR01038">
    <property type="entry name" value="TRNASYNTHARG"/>
</dbReference>
<dbReference type="SMART" id="SM01016">
    <property type="entry name" value="Arg_tRNA_synt_N"/>
    <property type="match status" value="1"/>
</dbReference>
<dbReference type="SMART" id="SM00836">
    <property type="entry name" value="DALR_1"/>
    <property type="match status" value="1"/>
</dbReference>
<dbReference type="SUPFAM" id="SSF47323">
    <property type="entry name" value="Anticodon-binding domain of a subclass of class I aminoacyl-tRNA synthetases"/>
    <property type="match status" value="1"/>
</dbReference>
<dbReference type="SUPFAM" id="SSF55190">
    <property type="entry name" value="Arginyl-tRNA synthetase (ArgRS), N-terminal 'additional' domain"/>
    <property type="match status" value="1"/>
</dbReference>
<dbReference type="SUPFAM" id="SSF52374">
    <property type="entry name" value="Nucleotidylyl transferase"/>
    <property type="match status" value="1"/>
</dbReference>
<dbReference type="PROSITE" id="PS00178">
    <property type="entry name" value="AA_TRNA_LIGASE_I"/>
    <property type="match status" value="1"/>
</dbReference>
<comment type="catalytic activity">
    <reaction evidence="1">
        <text>tRNA(Arg) + L-arginine + ATP = L-arginyl-tRNA(Arg) + AMP + diphosphate</text>
        <dbReference type="Rhea" id="RHEA:20301"/>
        <dbReference type="Rhea" id="RHEA-COMP:9658"/>
        <dbReference type="Rhea" id="RHEA-COMP:9673"/>
        <dbReference type="ChEBI" id="CHEBI:30616"/>
        <dbReference type="ChEBI" id="CHEBI:32682"/>
        <dbReference type="ChEBI" id="CHEBI:33019"/>
        <dbReference type="ChEBI" id="CHEBI:78442"/>
        <dbReference type="ChEBI" id="CHEBI:78513"/>
        <dbReference type="ChEBI" id="CHEBI:456215"/>
        <dbReference type="EC" id="6.1.1.19"/>
    </reaction>
</comment>
<comment type="subunit">
    <text evidence="1">Monomer.</text>
</comment>
<comment type="subcellular location">
    <subcellularLocation>
        <location evidence="1">Cytoplasm</location>
    </subcellularLocation>
</comment>
<comment type="similarity">
    <text evidence="1">Belongs to the class-I aminoacyl-tRNA synthetase family.</text>
</comment>